<comment type="function">
    <text evidence="1">Removes the formyl group from the N-terminal Met of newly synthesized proteins. Requires at least a dipeptide for an efficient rate of reaction. N-terminal L-methionine is a prerequisite for activity but the enzyme has broad specificity at other positions.</text>
</comment>
<comment type="catalytic activity">
    <reaction evidence="1">
        <text>N-terminal N-formyl-L-methionyl-[peptide] + H2O = N-terminal L-methionyl-[peptide] + formate</text>
        <dbReference type="Rhea" id="RHEA:24420"/>
        <dbReference type="Rhea" id="RHEA-COMP:10639"/>
        <dbReference type="Rhea" id="RHEA-COMP:10640"/>
        <dbReference type="ChEBI" id="CHEBI:15377"/>
        <dbReference type="ChEBI" id="CHEBI:15740"/>
        <dbReference type="ChEBI" id="CHEBI:49298"/>
        <dbReference type="ChEBI" id="CHEBI:64731"/>
        <dbReference type="EC" id="3.5.1.88"/>
    </reaction>
</comment>
<comment type="cofactor">
    <cofactor evidence="1">
        <name>Fe(2+)</name>
        <dbReference type="ChEBI" id="CHEBI:29033"/>
    </cofactor>
    <text evidence="1">Binds 1 Fe(2+) ion.</text>
</comment>
<comment type="similarity">
    <text evidence="1">Belongs to the polypeptide deformylase family.</text>
</comment>
<protein>
    <recommendedName>
        <fullName evidence="1">Peptide deformylase 1</fullName>
        <shortName evidence="1">PDF 1</shortName>
        <ecNumber evidence="1">3.5.1.88</ecNumber>
    </recommendedName>
    <alternativeName>
        <fullName evidence="1">Polypeptide deformylase 1</fullName>
    </alternativeName>
</protein>
<sequence length="216" mass="24104">MAQQDTDQQHTGVLPVDDDGFVIDAEDCEEREAAYRERGTSRPITVVGNPVLHKECKDVTDFGAELEQLVADMFASQRTAEGVGLAANQIGVDLKVFVYDCQDDEGTRHVGVVCNPKLVDLPADRRRLDDSNEGCLSVPTAYAPLARPDYAEVTGQDEKGNPIKVRGTGYFARCLQHETDHLYGYLYIDRLSKRERKDALRQMAENEPRYPVVAND</sequence>
<feature type="chain" id="PRO_0000082849" description="Peptide deformylase 1">
    <location>
        <begin position="1"/>
        <end position="216"/>
    </location>
</feature>
<feature type="active site" evidence="1">
    <location>
        <position position="178"/>
    </location>
</feature>
<feature type="binding site" evidence="1">
    <location>
        <position position="135"/>
    </location>
    <ligand>
        <name>Fe cation</name>
        <dbReference type="ChEBI" id="CHEBI:24875"/>
    </ligand>
</feature>
<feature type="binding site" evidence="1">
    <location>
        <position position="177"/>
    </location>
    <ligand>
        <name>Fe cation</name>
        <dbReference type="ChEBI" id="CHEBI:24875"/>
    </ligand>
</feature>
<feature type="binding site" evidence="1">
    <location>
        <position position="181"/>
    </location>
    <ligand>
        <name>Fe cation</name>
        <dbReference type="ChEBI" id="CHEBI:24875"/>
    </ligand>
</feature>
<reference key="1">
    <citation type="journal article" date="2001" name="Proc. Natl. Acad. Sci. U.S.A.">
        <title>Genome sequence of an industrial microorganism Streptomyces avermitilis: deducing the ability of producing secondary metabolites.</title>
        <authorList>
            <person name="Omura S."/>
            <person name="Ikeda H."/>
            <person name="Ishikawa J."/>
            <person name="Hanamoto A."/>
            <person name="Takahashi C."/>
            <person name="Shinose M."/>
            <person name="Takahashi Y."/>
            <person name="Horikawa H."/>
            <person name="Nakazawa H."/>
            <person name="Osonoe T."/>
            <person name="Kikuchi H."/>
            <person name="Shiba T."/>
            <person name="Sakaki Y."/>
            <person name="Hattori M."/>
        </authorList>
    </citation>
    <scope>NUCLEOTIDE SEQUENCE [LARGE SCALE GENOMIC DNA]</scope>
    <source>
        <strain>ATCC 31267 / DSM 46492 / JCM 5070 / NBRC 14893 / NCIMB 12804 / NRRL 8165 / MA-4680</strain>
    </source>
</reference>
<reference key="2">
    <citation type="journal article" date="2003" name="Nat. Biotechnol.">
        <title>Complete genome sequence and comparative analysis of the industrial microorganism Streptomyces avermitilis.</title>
        <authorList>
            <person name="Ikeda H."/>
            <person name="Ishikawa J."/>
            <person name="Hanamoto A."/>
            <person name="Shinose M."/>
            <person name="Kikuchi H."/>
            <person name="Shiba T."/>
            <person name="Sakaki Y."/>
            <person name="Hattori M."/>
            <person name="Omura S."/>
        </authorList>
    </citation>
    <scope>NUCLEOTIDE SEQUENCE [LARGE SCALE GENOMIC DNA]</scope>
    <source>
        <strain>ATCC 31267 / DSM 46492 / JCM 5070 / NBRC 14893 / NCIMB 12804 / NRRL 8165 / MA-4680</strain>
    </source>
</reference>
<keyword id="KW-0378">Hydrolase</keyword>
<keyword id="KW-0408">Iron</keyword>
<keyword id="KW-0479">Metal-binding</keyword>
<keyword id="KW-0648">Protein biosynthesis</keyword>
<keyword id="KW-1185">Reference proteome</keyword>
<organism>
    <name type="scientific">Streptomyces avermitilis (strain ATCC 31267 / DSM 46492 / JCM 5070 / NBRC 14893 / NCIMB 12804 / NRRL 8165 / MA-4680)</name>
    <dbReference type="NCBI Taxonomy" id="227882"/>
    <lineage>
        <taxon>Bacteria</taxon>
        <taxon>Bacillati</taxon>
        <taxon>Actinomycetota</taxon>
        <taxon>Actinomycetes</taxon>
        <taxon>Kitasatosporales</taxon>
        <taxon>Streptomycetaceae</taxon>
        <taxon>Streptomyces</taxon>
    </lineage>
</organism>
<evidence type="ECO:0000255" key="1">
    <source>
        <dbReference type="HAMAP-Rule" id="MF_00163"/>
    </source>
</evidence>
<dbReference type="EC" id="3.5.1.88" evidence="1"/>
<dbReference type="EMBL" id="BA000030">
    <property type="protein sequence ID" value="BAC70744.1"/>
    <property type="molecule type" value="Genomic_DNA"/>
</dbReference>
<dbReference type="SMR" id="Q82IV0"/>
<dbReference type="GeneID" id="41540114"/>
<dbReference type="KEGG" id="sma:SAVERM_3033"/>
<dbReference type="eggNOG" id="COG0242">
    <property type="taxonomic scope" value="Bacteria"/>
</dbReference>
<dbReference type="HOGENOM" id="CLU_061901_1_0_11"/>
<dbReference type="OrthoDB" id="9804313at2"/>
<dbReference type="Proteomes" id="UP000000428">
    <property type="component" value="Chromosome"/>
</dbReference>
<dbReference type="GO" id="GO:0046872">
    <property type="term" value="F:metal ion binding"/>
    <property type="evidence" value="ECO:0007669"/>
    <property type="project" value="UniProtKB-KW"/>
</dbReference>
<dbReference type="GO" id="GO:0042586">
    <property type="term" value="F:peptide deformylase activity"/>
    <property type="evidence" value="ECO:0007669"/>
    <property type="project" value="UniProtKB-UniRule"/>
</dbReference>
<dbReference type="GO" id="GO:0043686">
    <property type="term" value="P:co-translational protein modification"/>
    <property type="evidence" value="ECO:0007669"/>
    <property type="project" value="TreeGrafter"/>
</dbReference>
<dbReference type="GO" id="GO:0006412">
    <property type="term" value="P:translation"/>
    <property type="evidence" value="ECO:0007669"/>
    <property type="project" value="UniProtKB-UniRule"/>
</dbReference>
<dbReference type="CDD" id="cd00487">
    <property type="entry name" value="Pep_deformylase"/>
    <property type="match status" value="1"/>
</dbReference>
<dbReference type="FunFam" id="3.90.45.10:FF:000004">
    <property type="entry name" value="Peptide deformylase"/>
    <property type="match status" value="1"/>
</dbReference>
<dbReference type="Gene3D" id="3.90.45.10">
    <property type="entry name" value="Peptide deformylase"/>
    <property type="match status" value="1"/>
</dbReference>
<dbReference type="HAMAP" id="MF_00163">
    <property type="entry name" value="Pep_deformylase"/>
    <property type="match status" value="1"/>
</dbReference>
<dbReference type="InterPro" id="IPR023635">
    <property type="entry name" value="Peptide_deformylase"/>
</dbReference>
<dbReference type="InterPro" id="IPR036821">
    <property type="entry name" value="Peptide_deformylase_sf"/>
</dbReference>
<dbReference type="NCBIfam" id="TIGR00079">
    <property type="entry name" value="pept_deformyl"/>
    <property type="match status" value="1"/>
</dbReference>
<dbReference type="NCBIfam" id="NF001159">
    <property type="entry name" value="PRK00150.1-3"/>
    <property type="match status" value="1"/>
</dbReference>
<dbReference type="PANTHER" id="PTHR10458">
    <property type="entry name" value="PEPTIDE DEFORMYLASE"/>
    <property type="match status" value="1"/>
</dbReference>
<dbReference type="PANTHER" id="PTHR10458:SF2">
    <property type="entry name" value="PEPTIDE DEFORMYLASE, MITOCHONDRIAL"/>
    <property type="match status" value="1"/>
</dbReference>
<dbReference type="Pfam" id="PF01327">
    <property type="entry name" value="Pep_deformylase"/>
    <property type="match status" value="1"/>
</dbReference>
<dbReference type="PIRSF" id="PIRSF004749">
    <property type="entry name" value="Pep_def"/>
    <property type="match status" value="1"/>
</dbReference>
<dbReference type="PRINTS" id="PR01576">
    <property type="entry name" value="PDEFORMYLASE"/>
</dbReference>
<dbReference type="SUPFAM" id="SSF56420">
    <property type="entry name" value="Peptide deformylase"/>
    <property type="match status" value="1"/>
</dbReference>
<name>DEF1_STRAW</name>
<accession>Q82IV0</accession>
<proteinExistence type="inferred from homology"/>
<gene>
    <name evidence="1" type="primary">def1</name>
    <name type="ordered locus">SAV_3033</name>
</gene>